<accession>Q6ZHZ1</accession>
<accession>A0A0P0XEF8</accession>
<accession>Q6UU32</accession>
<reference key="1">
    <citation type="journal article" date="2004" name="Nat. Genet.">
        <title>Sequencing of a rice centromere uncovers active genes.</title>
        <authorList>
            <person name="Nagaki K."/>
            <person name="Cheng Z."/>
            <person name="Ouyang S."/>
            <person name="Talbert P.B."/>
            <person name="Kim M."/>
            <person name="Jones K.M."/>
            <person name="Henikoff S."/>
            <person name="Buell C.R."/>
            <person name="Jiang J."/>
        </authorList>
    </citation>
    <scope>NUCLEOTIDE SEQUENCE [GENOMIC DNA]</scope>
</reference>
<reference key="2">
    <citation type="journal article" date="2005" name="Nature">
        <title>The map-based sequence of the rice genome.</title>
        <authorList>
            <consortium name="International rice genome sequencing project (IRGSP)"/>
        </authorList>
    </citation>
    <scope>NUCLEOTIDE SEQUENCE [LARGE SCALE GENOMIC DNA]</scope>
    <source>
        <strain>cv. Nipponbare</strain>
    </source>
</reference>
<reference key="3">
    <citation type="journal article" date="2008" name="Nucleic Acids Res.">
        <title>The rice annotation project database (RAP-DB): 2008 update.</title>
        <authorList>
            <consortium name="The rice annotation project (RAP)"/>
        </authorList>
    </citation>
    <scope>GENOME REANNOTATION</scope>
    <source>
        <strain>cv. Nipponbare</strain>
    </source>
</reference>
<reference key="4">
    <citation type="journal article" date="2013" name="Rice">
        <title>Improvement of the Oryza sativa Nipponbare reference genome using next generation sequence and optical map data.</title>
        <authorList>
            <person name="Kawahara Y."/>
            <person name="de la Bastide M."/>
            <person name="Hamilton J.P."/>
            <person name="Kanamori H."/>
            <person name="McCombie W.R."/>
            <person name="Ouyang S."/>
            <person name="Schwartz D.C."/>
            <person name="Tanaka T."/>
            <person name="Wu J."/>
            <person name="Zhou S."/>
            <person name="Childs K.L."/>
            <person name="Davidson R.M."/>
            <person name="Lin H."/>
            <person name="Quesada-Ocampo L."/>
            <person name="Vaillancourt B."/>
            <person name="Sakai H."/>
            <person name="Lee S.S."/>
            <person name="Kim J."/>
            <person name="Numa H."/>
            <person name="Itoh T."/>
            <person name="Buell C.R."/>
            <person name="Matsumoto T."/>
        </authorList>
    </citation>
    <scope>GENOME REANNOTATION</scope>
    <source>
        <strain>cv. Nipponbare</strain>
    </source>
</reference>
<reference key="5">
    <citation type="journal article" date="2003" name="Science">
        <title>Collection, mapping, and annotation of over 28,000 cDNA clones from japonica rice.</title>
        <authorList>
            <consortium name="The rice full-length cDNA consortium"/>
        </authorList>
    </citation>
    <scope>NUCLEOTIDE SEQUENCE [LARGE SCALE MRNA]</scope>
    <source>
        <strain>cv. Nipponbare</strain>
    </source>
</reference>
<reference key="6">
    <citation type="journal article" date="2007" name="J. Plant Physiol.">
        <title>Phylogenetic and expression analysis of sucrose phosphate synthase isozymes in plants.</title>
        <authorList>
            <person name="Lutfiyya L.L."/>
            <person name="Xu N."/>
            <person name="D'Ordine R.L."/>
            <person name="Morrell J.A."/>
            <person name="Miller P.W."/>
            <person name="Duff S.M."/>
        </authorList>
    </citation>
    <scope>GENE FAMILY</scope>
</reference>
<reference key="7">
    <citation type="journal article" date="2011" name="Plant Sci.">
        <title>Tissue specificity and diurnal change in gene expression of the sucrose phosphate synthase gene family in rice.</title>
        <authorList>
            <person name="Okamura M."/>
            <person name="Aoki N."/>
            <person name="Hirose T."/>
            <person name="Yonekura M."/>
            <person name="Ohto C."/>
            <person name="Ohsugi R."/>
        </authorList>
    </citation>
    <scope>TISSUE SPECIFICITY</scope>
    <scope>DEVELOPMENTAL STAGE</scope>
    <scope>INDUCTION</scope>
</reference>
<gene>
    <name type="primary">SPS4</name>
    <name type="synonym">SPS8</name>
    <name type="ordered locus">Os08g0301500</name>
    <name type="ordered locus">LOC_Os08g20660</name>
    <name type="ORF">OJ1115_A07.105</name>
</gene>
<evidence type="ECO:0000250" key="1"/>
<evidence type="ECO:0000256" key="2">
    <source>
        <dbReference type="SAM" id="MobiDB-lite"/>
    </source>
</evidence>
<evidence type="ECO:0000269" key="3">
    <source>
    </source>
</evidence>
<evidence type="ECO:0000305" key="4"/>
<proteinExistence type="evidence at transcript level"/>
<keyword id="KW-0328">Glycosyltransferase</keyword>
<keyword id="KW-1185">Reference proteome</keyword>
<keyword id="KW-0808">Transferase</keyword>
<sequence length="1066" mass="118725">MAGNDWINSYLEAILDAGGAAGEISAAAGGGGDGAAATGEKRDKSSLMLRERGRFSPARYFVEEVISGFDETDLYKTWVRTAAMRSPQERNTRLENMSWRIWNLARKKKQIEGEEASRLAKQRLEREKARRYAAADMSEDLSEGEKGENINESSSTHDESTRGRMPRIGSTDAIEAWASQHKDKKLYIVLISIHGLIRGENMELGRDSDTGGQVKYVVELARALGSTPGVYRVDLLTRQISAPDVDWSYGEPTEMLSPRNSENFGHDMGESSGAYIVRIPFGPRDKYIPKEHLWPHIQEFVDGALVHIMQMSKVLGEQVGSGQLVWPVVIHGHYADAGDSAALLSGALNVPMIFTGHSLGRDKLEQLLKQGRQTRDEINTIYKIMRRIEAEELCLDASEIIITSTRQEIEQQWGLYDGFDLTMARKLRARIKRGVSCYGRYMPRMIAVPPGMEFSHIVPHDVDQDGEEANEDGSGSTDPPIWADIMRFFSNPRKPMILALARPDPKKNITTLVKAFGEHRELRNLANLTLIMGNRDVIDEMSSTNSAVLTSILKLIDKYDLYGQVAYPKHHKQSEVPDIYRLAARTKGVFINCAFIEPFGLTLIEAAAYGLPMVATRNGGPVDIHRVLDNGILVDPHNQNEIAEALYKLVSDKQLWAQCRQNGLKNIHQFSWPEHCKNYLSRVGTLKPRHPRWQKSDDATEVSEADSPGDSLRDVHDISLNLKLSLDSEKSSTKENSVRRNLEDAVQKLSRGVSANRKTESVENMEATTGNKWPSLRRRKHIVVIAIDSVQDANLVEIIKNIFVASSNERLSGSVGFVLSTSRAISEVHSLLTSGGIEATDFDAFICNSGSDLCYPSSNSEDMLSPAELPFMIDLDYHTQIEYRWGGEGLRKTLICWAAEKSEGGQVVLVEDEECSSTYCISFRVKNAEAVPPVKELRKTMRIQALRCHVLYSHDGSKLNVIPVLASRSQALRYLYIRWGVELSNMTVVVGESGDTDYEGLLGGVHKTIILKGSFNAVPNQVHAARSYSLQDVISFDKPGITSIEGYGPDNLKSALQQFGILKDNV</sequence>
<comment type="function">
    <text evidence="1">Plays a role in photosynthetic sucrose synthesis by catalyzing the rate-limiting step of sucrose biosynthesis from UDP-glucose and fructose- 6-phosphate. Involved in the regulation of carbon partitioning in the leaves of plants. May regulate the synthesis of sucrose and therefore play a major role as a limiting factor in the export of photoassimilates out of the leaf. Plays a role for sucrose availability that is essential for plant growth and fiber elongation (By similarity).</text>
</comment>
<comment type="catalytic activity">
    <reaction>
        <text>beta-D-fructose 6-phosphate + UDP-alpha-D-glucose = sucrose 6(F)-phosphate + UDP + H(+)</text>
        <dbReference type="Rhea" id="RHEA:22172"/>
        <dbReference type="ChEBI" id="CHEBI:15378"/>
        <dbReference type="ChEBI" id="CHEBI:57634"/>
        <dbReference type="ChEBI" id="CHEBI:57723"/>
        <dbReference type="ChEBI" id="CHEBI:58223"/>
        <dbReference type="ChEBI" id="CHEBI:58885"/>
        <dbReference type="EC" id="2.4.1.14"/>
    </reaction>
</comment>
<comment type="activity regulation">
    <text evidence="1">Activity is regulated by phosphorylation and moderated by concentration of metabolites and light.</text>
</comment>
<comment type="pathway">
    <text>Glycan biosynthesis; sucrose biosynthesis; sucrose from D-fructose 6-phosphate and UDP-alpha-D-glucose: step 1/2.</text>
</comment>
<comment type="subunit">
    <text evidence="1">Homodimer or homotetramer.</text>
</comment>
<comment type="tissue specificity">
    <text evidence="3">Expressed in germinating seeds.</text>
</comment>
<comment type="developmental stage">
    <text evidence="3">Expressed in source leaves and sink leaves.</text>
</comment>
<comment type="induction">
    <text evidence="3">Circadian-regulated, with the highest expression 1 hour after the beginning of dark period (in 14 hours light/10 hours dark cycle).</text>
</comment>
<comment type="similarity">
    <text evidence="4">Belongs to the glycosyltransferase 1 family.</text>
</comment>
<comment type="sequence caution" evidence="4">
    <conflict type="erroneous gene model prediction">
        <sequence resource="EMBL-CDS" id="AAQ56529"/>
    </conflict>
</comment>
<feature type="chain" id="PRO_0000413643" description="Probable sucrose-phosphate synthase 4">
    <location>
        <begin position="1"/>
        <end position="1066"/>
    </location>
</feature>
<feature type="region of interest" description="Disordered" evidence="2">
    <location>
        <begin position="132"/>
        <end position="166"/>
    </location>
</feature>
<feature type="region of interest" description="Disordered" evidence="2">
    <location>
        <begin position="688"/>
        <end position="714"/>
    </location>
</feature>
<feature type="compositionally biased region" description="Basic and acidic residues" evidence="2">
    <location>
        <begin position="143"/>
        <end position="162"/>
    </location>
</feature>
<feature type="sequence conflict" description="In Ref. 5; AK101676." evidence="4" ref="5">
    <original>N</original>
    <variation>S</variation>
    <location>
        <position position="527"/>
    </location>
</feature>
<feature type="sequence conflict" description="In Ref. 5; AK101676." evidence="4" ref="5">
    <original>A</original>
    <variation>T</variation>
    <location>
        <position position="615"/>
    </location>
</feature>
<feature type="sequence conflict" description="In Ref. 5; AK101676." evidence="4" ref="5">
    <original>E</original>
    <variation>G</variation>
    <location>
        <position position="900"/>
    </location>
</feature>
<organism>
    <name type="scientific">Oryza sativa subsp. japonica</name>
    <name type="common">Rice</name>
    <dbReference type="NCBI Taxonomy" id="39947"/>
    <lineage>
        <taxon>Eukaryota</taxon>
        <taxon>Viridiplantae</taxon>
        <taxon>Streptophyta</taxon>
        <taxon>Embryophyta</taxon>
        <taxon>Tracheophyta</taxon>
        <taxon>Spermatophyta</taxon>
        <taxon>Magnoliopsida</taxon>
        <taxon>Liliopsida</taxon>
        <taxon>Poales</taxon>
        <taxon>Poaceae</taxon>
        <taxon>BOP clade</taxon>
        <taxon>Oryzoideae</taxon>
        <taxon>Oryzeae</taxon>
        <taxon>Oryzinae</taxon>
        <taxon>Oryza</taxon>
        <taxon>Oryza sativa</taxon>
    </lineage>
</organism>
<protein>
    <recommendedName>
        <fullName>Probable sucrose-phosphate synthase 4</fullName>
        <ecNumber>2.4.1.14</ecNumber>
    </recommendedName>
    <alternativeName>
        <fullName>Sucrose phosphate synthase 4F</fullName>
        <shortName>OsSPS4F</shortName>
    </alternativeName>
    <alternativeName>
        <fullName>UDP-glucose-fructose-phosphate glucosyltransferase</fullName>
    </alternativeName>
</protein>
<name>SPSA4_ORYSJ</name>
<dbReference type="EC" id="2.4.1.14"/>
<dbReference type="EMBL" id="AY360393">
    <property type="protein sequence ID" value="AAQ56529.1"/>
    <property type="status" value="ALT_SEQ"/>
    <property type="molecule type" value="Genomic_DNA"/>
</dbReference>
<dbReference type="EMBL" id="AP004041">
    <property type="protein sequence ID" value="BAC92378.1"/>
    <property type="molecule type" value="Genomic_DNA"/>
</dbReference>
<dbReference type="EMBL" id="AP008214">
    <property type="protein sequence ID" value="BAF23409.1"/>
    <property type="molecule type" value="Genomic_DNA"/>
</dbReference>
<dbReference type="EMBL" id="AP014964">
    <property type="protein sequence ID" value="BAT04814.1"/>
    <property type="molecule type" value="Genomic_DNA"/>
</dbReference>
<dbReference type="EMBL" id="AK101676">
    <property type="status" value="NOT_ANNOTATED_CDS"/>
    <property type="molecule type" value="mRNA"/>
</dbReference>
<dbReference type="RefSeq" id="XP_015650062.1">
    <property type="nucleotide sequence ID" value="XM_015794576.1"/>
</dbReference>
<dbReference type="RefSeq" id="XP_015650063.1">
    <property type="nucleotide sequence ID" value="XM_015794577.1"/>
</dbReference>
<dbReference type="SMR" id="Q6ZHZ1"/>
<dbReference type="FunCoup" id="Q6ZHZ1">
    <property type="interactions" value="340"/>
</dbReference>
<dbReference type="STRING" id="39947.Q6ZHZ1"/>
<dbReference type="CAZy" id="GT4">
    <property type="family name" value="Glycosyltransferase Family 4"/>
</dbReference>
<dbReference type="iPTMnet" id="Q6ZHZ1"/>
<dbReference type="PaxDb" id="39947-Q6ZHZ1"/>
<dbReference type="EnsemblPlants" id="Os08t0301500-01">
    <property type="protein sequence ID" value="Os08t0301500-01"/>
    <property type="gene ID" value="Os08g0301500"/>
</dbReference>
<dbReference type="Gramene" id="Os08t0301500-01">
    <property type="protein sequence ID" value="Os08t0301500-01"/>
    <property type="gene ID" value="Os08g0301500"/>
</dbReference>
<dbReference type="KEGG" id="dosa:Os08g0301500"/>
<dbReference type="eggNOG" id="KOG0853">
    <property type="taxonomic scope" value="Eukaryota"/>
</dbReference>
<dbReference type="HOGENOM" id="CLU_009583_24_0_1"/>
<dbReference type="InParanoid" id="Q6ZHZ1"/>
<dbReference type="OMA" id="AWSKGIS"/>
<dbReference type="OrthoDB" id="512920at2759"/>
<dbReference type="BRENDA" id="2.4.1.14">
    <property type="organism ID" value="8948"/>
</dbReference>
<dbReference type="PlantReactome" id="R-OSA-1119465">
    <property type="pathway name" value="Sucrose biosynthesis"/>
</dbReference>
<dbReference type="UniPathway" id="UPA00371">
    <property type="reaction ID" value="UER00545"/>
</dbReference>
<dbReference type="Proteomes" id="UP000000763">
    <property type="component" value="Chromosome 8"/>
</dbReference>
<dbReference type="Proteomes" id="UP000059680">
    <property type="component" value="Chromosome 8"/>
</dbReference>
<dbReference type="GO" id="GO:0046524">
    <property type="term" value="F:sucrose-phosphate synthase activity"/>
    <property type="evidence" value="ECO:0007669"/>
    <property type="project" value="UniProtKB-EC"/>
</dbReference>
<dbReference type="GO" id="GO:0005986">
    <property type="term" value="P:sucrose biosynthetic process"/>
    <property type="evidence" value="ECO:0007669"/>
    <property type="project" value="UniProtKB-UniPathway"/>
</dbReference>
<dbReference type="CDD" id="cd16419">
    <property type="entry name" value="HAD_SPS"/>
    <property type="match status" value="1"/>
</dbReference>
<dbReference type="Gene3D" id="3.40.50.2000">
    <property type="entry name" value="Glycogen Phosphorylase B"/>
    <property type="match status" value="2"/>
</dbReference>
<dbReference type="InterPro" id="IPR001296">
    <property type="entry name" value="Glyco_trans_1"/>
</dbReference>
<dbReference type="InterPro" id="IPR006380">
    <property type="entry name" value="SPP-like_dom"/>
</dbReference>
<dbReference type="InterPro" id="IPR044161">
    <property type="entry name" value="SPS"/>
</dbReference>
<dbReference type="InterPro" id="IPR035659">
    <property type="entry name" value="SPS_C"/>
</dbReference>
<dbReference type="InterPro" id="IPR012819">
    <property type="entry name" value="SPS_pln"/>
</dbReference>
<dbReference type="InterPro" id="IPR000368">
    <property type="entry name" value="Sucrose_synth_GT-B1"/>
</dbReference>
<dbReference type="NCBIfam" id="TIGR02468">
    <property type="entry name" value="sucrsPsyn_pln"/>
    <property type="match status" value="1"/>
</dbReference>
<dbReference type="PANTHER" id="PTHR46039:SF2">
    <property type="entry name" value="SUCROSE-PHOSPHATE SYNTHASE 1"/>
    <property type="match status" value="1"/>
</dbReference>
<dbReference type="PANTHER" id="PTHR46039">
    <property type="entry name" value="SUCROSE-PHOSPHATE SYNTHASE 3-RELATED"/>
    <property type="match status" value="1"/>
</dbReference>
<dbReference type="Pfam" id="PF00534">
    <property type="entry name" value="Glycos_transf_1"/>
    <property type="match status" value="1"/>
</dbReference>
<dbReference type="Pfam" id="PF00862">
    <property type="entry name" value="GT-B_Sucrose_synth"/>
    <property type="match status" value="1"/>
</dbReference>
<dbReference type="Pfam" id="PF05116">
    <property type="entry name" value="S6PP"/>
    <property type="match status" value="1"/>
</dbReference>
<dbReference type="SUPFAM" id="SSF53756">
    <property type="entry name" value="UDP-Glycosyltransferase/glycogen phosphorylase"/>
    <property type="match status" value="1"/>
</dbReference>